<gene>
    <name evidence="1" type="primary">ureD</name>
    <name type="ordered locus">Abu_0805</name>
</gene>
<evidence type="ECO:0000255" key="1">
    <source>
        <dbReference type="HAMAP-Rule" id="MF_01384"/>
    </source>
</evidence>
<dbReference type="EMBL" id="CP000361">
    <property type="protein sequence ID" value="ABV67070.1"/>
    <property type="molecule type" value="Genomic_DNA"/>
</dbReference>
<dbReference type="RefSeq" id="WP_012012547.1">
    <property type="nucleotide sequence ID" value="NC_009850.1"/>
</dbReference>
<dbReference type="SMR" id="A8ESZ6"/>
<dbReference type="STRING" id="367737.Abu_0805"/>
<dbReference type="GeneID" id="24305217"/>
<dbReference type="KEGG" id="abu:Abu_0805"/>
<dbReference type="eggNOG" id="COG0829">
    <property type="taxonomic scope" value="Bacteria"/>
</dbReference>
<dbReference type="HOGENOM" id="CLU_1109636_0_0_7"/>
<dbReference type="Proteomes" id="UP000001136">
    <property type="component" value="Chromosome"/>
</dbReference>
<dbReference type="GO" id="GO:0005737">
    <property type="term" value="C:cytoplasm"/>
    <property type="evidence" value="ECO:0007669"/>
    <property type="project" value="UniProtKB-SubCell"/>
</dbReference>
<dbReference type="GO" id="GO:0016151">
    <property type="term" value="F:nickel cation binding"/>
    <property type="evidence" value="ECO:0007669"/>
    <property type="project" value="InterPro"/>
</dbReference>
<dbReference type="HAMAP" id="MF_01384">
    <property type="entry name" value="UreD"/>
    <property type="match status" value="1"/>
</dbReference>
<dbReference type="InterPro" id="IPR002669">
    <property type="entry name" value="UreD"/>
</dbReference>
<dbReference type="PANTHER" id="PTHR33643">
    <property type="entry name" value="UREASE ACCESSORY PROTEIN D"/>
    <property type="match status" value="1"/>
</dbReference>
<dbReference type="PANTHER" id="PTHR33643:SF1">
    <property type="entry name" value="UREASE ACCESSORY PROTEIN D"/>
    <property type="match status" value="1"/>
</dbReference>
<dbReference type="Pfam" id="PF01774">
    <property type="entry name" value="UreD"/>
    <property type="match status" value="1"/>
</dbReference>
<name>URED_ALIB4</name>
<keyword id="KW-0143">Chaperone</keyword>
<keyword id="KW-0963">Cytoplasm</keyword>
<keyword id="KW-0996">Nickel insertion</keyword>
<keyword id="KW-1185">Reference proteome</keyword>
<feature type="chain" id="PRO_0000346549" description="Urease accessory protein UreD">
    <location>
        <begin position="1"/>
        <end position="250"/>
    </location>
</feature>
<comment type="function">
    <text evidence="1">Required for maturation of urease via the functional incorporation of the urease nickel metallocenter.</text>
</comment>
<comment type="subunit">
    <text evidence="1">UreD, UreF and UreG form a complex that acts as a GTP-hydrolysis-dependent molecular chaperone, activating the urease apoprotein by helping to assemble the nickel containing metallocenter of UreC. The UreE protein probably delivers the nickel.</text>
</comment>
<comment type="subcellular location">
    <subcellularLocation>
        <location evidence="1">Cytoplasm</location>
    </subcellularLocation>
</comment>
<comment type="similarity">
    <text evidence="1">Belongs to the UreD family.</text>
</comment>
<reference key="1">
    <citation type="journal article" date="2007" name="PLoS ONE">
        <title>The complete genome sequence and analysis of the Epsilonproteobacterium Arcobacter butzleri.</title>
        <authorList>
            <person name="Miller W.G."/>
            <person name="Parker C.T."/>
            <person name="Rubenfield M."/>
            <person name="Mendz G.L."/>
            <person name="Woesten M.M.S.M."/>
            <person name="Ussery D.W."/>
            <person name="Stolz J.F."/>
            <person name="Binnewies T.T."/>
            <person name="Hallin P.F."/>
            <person name="Wang G."/>
            <person name="Malek J.A."/>
            <person name="Rogosin A."/>
            <person name="Stanker L.H."/>
            <person name="Mandrell R.E."/>
        </authorList>
    </citation>
    <scope>NUCLEOTIDE SEQUENCE [LARGE SCALE GENOMIC DNA]</scope>
    <source>
        <strain>RM4018</strain>
    </source>
</reference>
<sequence>MSIKFSFKDEVFSLDKLQLPSRHYHFNDNENYIKLLNIGEGIFPKDKIRTSLSLDNSNLIFTTESATKIYPSKKEYGIQKIDIVLKNNSNLEFINDELILYKDSRYIQFFNLKSDENSTFFYTDILSRGRSFENFDFSNMLIKNSFFCEKSMEYMEKFDVKGAELKDYINRKSSSNFIFAKIYIKTNNNEEFLNRIYLEKFESFTYTKNKKIILGVISSNNMFELKNQIFKIWELYRKELNKSKFNLGKQ</sequence>
<protein>
    <recommendedName>
        <fullName evidence="1">Urease accessory protein UreD</fullName>
    </recommendedName>
</protein>
<proteinExistence type="inferred from homology"/>
<organism>
    <name type="scientific">Aliarcobacter butzleri (strain RM4018)</name>
    <name type="common">Arcobacter butzleri</name>
    <dbReference type="NCBI Taxonomy" id="367737"/>
    <lineage>
        <taxon>Bacteria</taxon>
        <taxon>Pseudomonadati</taxon>
        <taxon>Campylobacterota</taxon>
        <taxon>Epsilonproteobacteria</taxon>
        <taxon>Campylobacterales</taxon>
        <taxon>Arcobacteraceae</taxon>
        <taxon>Aliarcobacter</taxon>
    </lineage>
</organism>
<accession>A8ESZ6</accession>